<protein>
    <recommendedName>
        <fullName evidence="1">Biosynthetic peptidoglycan transglycosylase</fullName>
        <ecNumber evidence="1">2.4.99.28</ecNumber>
    </recommendedName>
    <alternativeName>
        <fullName evidence="1">Glycan polymerase</fullName>
    </alternativeName>
    <alternativeName>
        <fullName evidence="1">Peptidoglycan glycosyltransferase MtgA</fullName>
        <shortName evidence="1">PGT</shortName>
    </alternativeName>
</protein>
<feature type="chain" id="PRO_0000083147" description="Biosynthetic peptidoglycan transglycosylase">
    <location>
        <begin position="1"/>
        <end position="246"/>
    </location>
</feature>
<feature type="transmembrane region" description="Helical" evidence="1">
    <location>
        <begin position="20"/>
        <end position="42"/>
    </location>
</feature>
<comment type="function">
    <text evidence="1">Peptidoglycan polymerase that catalyzes glycan chain elongation from lipid-linked precursors.</text>
</comment>
<comment type="catalytic activity">
    <reaction evidence="1">
        <text>[GlcNAc-(1-&gt;4)-Mur2Ac(oyl-L-Ala-gamma-D-Glu-L-Lys-D-Ala-D-Ala)](n)-di-trans,octa-cis-undecaprenyl diphosphate + beta-D-GlcNAc-(1-&gt;4)-Mur2Ac(oyl-L-Ala-gamma-D-Glu-L-Lys-D-Ala-D-Ala)-di-trans,octa-cis-undecaprenyl diphosphate = [GlcNAc-(1-&gt;4)-Mur2Ac(oyl-L-Ala-gamma-D-Glu-L-Lys-D-Ala-D-Ala)](n+1)-di-trans,octa-cis-undecaprenyl diphosphate + di-trans,octa-cis-undecaprenyl diphosphate + H(+)</text>
        <dbReference type="Rhea" id="RHEA:23708"/>
        <dbReference type="Rhea" id="RHEA-COMP:9602"/>
        <dbReference type="Rhea" id="RHEA-COMP:9603"/>
        <dbReference type="ChEBI" id="CHEBI:15378"/>
        <dbReference type="ChEBI" id="CHEBI:58405"/>
        <dbReference type="ChEBI" id="CHEBI:60033"/>
        <dbReference type="ChEBI" id="CHEBI:78435"/>
        <dbReference type="EC" id="2.4.99.28"/>
    </reaction>
</comment>
<comment type="pathway">
    <text evidence="1">Cell wall biogenesis; peptidoglycan biosynthesis.</text>
</comment>
<comment type="subcellular location">
    <subcellularLocation>
        <location evidence="1">Cell inner membrane</location>
        <topology evidence="1">Single-pass membrane protein</topology>
    </subcellularLocation>
</comment>
<comment type="similarity">
    <text evidence="1">Belongs to the glycosyltransferase 51 family.</text>
</comment>
<organism>
    <name type="scientific">Xanthomonas axonopodis pv. citri (strain 306)</name>
    <dbReference type="NCBI Taxonomy" id="190486"/>
    <lineage>
        <taxon>Bacteria</taxon>
        <taxon>Pseudomonadati</taxon>
        <taxon>Pseudomonadota</taxon>
        <taxon>Gammaproteobacteria</taxon>
        <taxon>Lysobacterales</taxon>
        <taxon>Lysobacteraceae</taxon>
        <taxon>Xanthomonas</taxon>
    </lineage>
</organism>
<reference key="1">
    <citation type="journal article" date="2002" name="Nature">
        <title>Comparison of the genomes of two Xanthomonas pathogens with differing host specificities.</title>
        <authorList>
            <person name="da Silva A.C.R."/>
            <person name="Ferro J.A."/>
            <person name="Reinach F.C."/>
            <person name="Farah C.S."/>
            <person name="Furlan L.R."/>
            <person name="Quaggio R.B."/>
            <person name="Monteiro-Vitorello C.B."/>
            <person name="Van Sluys M.A."/>
            <person name="Almeida N.F. Jr."/>
            <person name="Alves L.M.C."/>
            <person name="do Amaral A.M."/>
            <person name="Bertolini M.C."/>
            <person name="Camargo L.E.A."/>
            <person name="Camarotte G."/>
            <person name="Cannavan F."/>
            <person name="Cardozo J."/>
            <person name="Chambergo F."/>
            <person name="Ciapina L.P."/>
            <person name="Cicarelli R.M.B."/>
            <person name="Coutinho L.L."/>
            <person name="Cursino-Santos J.R."/>
            <person name="El-Dorry H."/>
            <person name="Faria J.B."/>
            <person name="Ferreira A.J.S."/>
            <person name="Ferreira R.C.C."/>
            <person name="Ferro M.I.T."/>
            <person name="Formighieri E.F."/>
            <person name="Franco M.C."/>
            <person name="Greggio C.C."/>
            <person name="Gruber A."/>
            <person name="Katsuyama A.M."/>
            <person name="Kishi L.T."/>
            <person name="Leite R.P."/>
            <person name="Lemos E.G.M."/>
            <person name="Lemos M.V.F."/>
            <person name="Locali E.C."/>
            <person name="Machado M.A."/>
            <person name="Madeira A.M.B.N."/>
            <person name="Martinez-Rossi N.M."/>
            <person name="Martins E.C."/>
            <person name="Meidanis J."/>
            <person name="Menck C.F.M."/>
            <person name="Miyaki C.Y."/>
            <person name="Moon D.H."/>
            <person name="Moreira L.M."/>
            <person name="Novo M.T.M."/>
            <person name="Okura V.K."/>
            <person name="Oliveira M.C."/>
            <person name="Oliveira V.R."/>
            <person name="Pereira H.A."/>
            <person name="Rossi A."/>
            <person name="Sena J.A.D."/>
            <person name="Silva C."/>
            <person name="de Souza R.F."/>
            <person name="Spinola L.A.F."/>
            <person name="Takita M.A."/>
            <person name="Tamura R.E."/>
            <person name="Teixeira E.C."/>
            <person name="Tezza R.I.D."/>
            <person name="Trindade dos Santos M."/>
            <person name="Truffi D."/>
            <person name="Tsai S.M."/>
            <person name="White F.F."/>
            <person name="Setubal J.C."/>
            <person name="Kitajima J.P."/>
        </authorList>
    </citation>
    <scope>NUCLEOTIDE SEQUENCE [LARGE SCALE GENOMIC DNA]</scope>
    <source>
        <strain>306</strain>
    </source>
</reference>
<proteinExistence type="inferred from homology"/>
<sequence>MGTDAWDGKQAAPPRRARRWLRWLMAAPLLFAAASVLQVLILRVVDPPISSMMAGRYLEAWGEGDWSFSLHRQWRDYDKIAASLPISVVAAEDQQFPMHHGFDLQAIEKARDHNARGGRVRGASTISQQVAKNVFLWQGRSWVRKGLEAWYTVLIELFWPKQRILEMYLNVAEFGDGVYGAQAAAQQFWSKDAAGLSPSESARLAAVLPSPRRYDARRPGAFVQRRAGWIQRQARQLGGPAYLQAP</sequence>
<gene>
    <name evidence="1" type="primary">mtgA</name>
    <name type="ordered locus">XAC3047</name>
</gene>
<dbReference type="EC" id="2.4.99.28" evidence="1"/>
<dbReference type="EMBL" id="AE008923">
    <property type="protein sequence ID" value="AAM37892.1"/>
    <property type="molecule type" value="Genomic_DNA"/>
</dbReference>
<dbReference type="RefSeq" id="WP_011052002.1">
    <property type="nucleotide sequence ID" value="NC_003919.1"/>
</dbReference>
<dbReference type="SMR" id="Q8PI51"/>
<dbReference type="CAZy" id="GT51">
    <property type="family name" value="Glycosyltransferase Family 51"/>
</dbReference>
<dbReference type="GeneID" id="66912122"/>
<dbReference type="KEGG" id="xac:XAC3047"/>
<dbReference type="eggNOG" id="COG0744">
    <property type="taxonomic scope" value="Bacteria"/>
</dbReference>
<dbReference type="HOGENOM" id="CLU_006354_1_1_6"/>
<dbReference type="UniPathway" id="UPA00219"/>
<dbReference type="Proteomes" id="UP000000576">
    <property type="component" value="Chromosome"/>
</dbReference>
<dbReference type="GO" id="GO:0009274">
    <property type="term" value="C:peptidoglycan-based cell wall"/>
    <property type="evidence" value="ECO:0007669"/>
    <property type="project" value="InterPro"/>
</dbReference>
<dbReference type="GO" id="GO:0005886">
    <property type="term" value="C:plasma membrane"/>
    <property type="evidence" value="ECO:0007669"/>
    <property type="project" value="UniProtKB-SubCell"/>
</dbReference>
<dbReference type="GO" id="GO:0016763">
    <property type="term" value="F:pentosyltransferase activity"/>
    <property type="evidence" value="ECO:0007669"/>
    <property type="project" value="InterPro"/>
</dbReference>
<dbReference type="GO" id="GO:0008955">
    <property type="term" value="F:peptidoglycan glycosyltransferase activity"/>
    <property type="evidence" value="ECO:0007669"/>
    <property type="project" value="UniProtKB-UniRule"/>
</dbReference>
<dbReference type="GO" id="GO:0071555">
    <property type="term" value="P:cell wall organization"/>
    <property type="evidence" value="ECO:0007669"/>
    <property type="project" value="UniProtKB-KW"/>
</dbReference>
<dbReference type="GO" id="GO:0009252">
    <property type="term" value="P:peptidoglycan biosynthetic process"/>
    <property type="evidence" value="ECO:0007669"/>
    <property type="project" value="UniProtKB-UniRule"/>
</dbReference>
<dbReference type="GO" id="GO:0008360">
    <property type="term" value="P:regulation of cell shape"/>
    <property type="evidence" value="ECO:0007669"/>
    <property type="project" value="UniProtKB-KW"/>
</dbReference>
<dbReference type="Gene3D" id="1.10.3810.10">
    <property type="entry name" value="Biosynthetic peptidoglycan transglycosylase-like"/>
    <property type="match status" value="1"/>
</dbReference>
<dbReference type="HAMAP" id="MF_00766">
    <property type="entry name" value="PGT_MtgA"/>
    <property type="match status" value="1"/>
</dbReference>
<dbReference type="InterPro" id="IPR001264">
    <property type="entry name" value="Glyco_trans_51"/>
</dbReference>
<dbReference type="InterPro" id="IPR023346">
    <property type="entry name" value="Lysozyme-like_dom_sf"/>
</dbReference>
<dbReference type="InterPro" id="IPR036950">
    <property type="entry name" value="PBP_transglycosylase"/>
</dbReference>
<dbReference type="InterPro" id="IPR011812">
    <property type="entry name" value="Pep_trsgly"/>
</dbReference>
<dbReference type="NCBIfam" id="TIGR02070">
    <property type="entry name" value="mono_pep_trsgly"/>
    <property type="match status" value="1"/>
</dbReference>
<dbReference type="PANTHER" id="PTHR30400:SF0">
    <property type="entry name" value="BIOSYNTHETIC PEPTIDOGLYCAN TRANSGLYCOSYLASE"/>
    <property type="match status" value="1"/>
</dbReference>
<dbReference type="PANTHER" id="PTHR30400">
    <property type="entry name" value="MONOFUNCTIONAL BIOSYNTHETIC PEPTIDOGLYCAN TRANSGLYCOSYLASE"/>
    <property type="match status" value="1"/>
</dbReference>
<dbReference type="Pfam" id="PF00912">
    <property type="entry name" value="Transgly"/>
    <property type="match status" value="1"/>
</dbReference>
<dbReference type="SUPFAM" id="SSF53955">
    <property type="entry name" value="Lysozyme-like"/>
    <property type="match status" value="1"/>
</dbReference>
<name>MTGA_XANAC</name>
<keyword id="KW-0997">Cell inner membrane</keyword>
<keyword id="KW-1003">Cell membrane</keyword>
<keyword id="KW-0133">Cell shape</keyword>
<keyword id="KW-0961">Cell wall biogenesis/degradation</keyword>
<keyword id="KW-0328">Glycosyltransferase</keyword>
<keyword id="KW-0472">Membrane</keyword>
<keyword id="KW-0573">Peptidoglycan synthesis</keyword>
<keyword id="KW-0808">Transferase</keyword>
<keyword id="KW-0812">Transmembrane</keyword>
<keyword id="KW-1133">Transmembrane helix</keyword>
<evidence type="ECO:0000255" key="1">
    <source>
        <dbReference type="HAMAP-Rule" id="MF_00766"/>
    </source>
</evidence>
<accession>Q8PI51</accession>